<organism>
    <name type="scientific">Arabidopsis thaliana</name>
    <name type="common">Mouse-ear cress</name>
    <dbReference type="NCBI Taxonomy" id="3702"/>
    <lineage>
        <taxon>Eukaryota</taxon>
        <taxon>Viridiplantae</taxon>
        <taxon>Streptophyta</taxon>
        <taxon>Embryophyta</taxon>
        <taxon>Tracheophyta</taxon>
        <taxon>Spermatophyta</taxon>
        <taxon>Magnoliopsida</taxon>
        <taxon>eudicotyledons</taxon>
        <taxon>Gunneridae</taxon>
        <taxon>Pentapetalae</taxon>
        <taxon>rosids</taxon>
        <taxon>malvids</taxon>
        <taxon>Brassicales</taxon>
        <taxon>Brassicaceae</taxon>
        <taxon>Camelineae</taxon>
        <taxon>Arabidopsis</taxon>
    </lineage>
</organism>
<sequence length="491" mass="54720">MGERDDEAEGILEKAKIPLLKDQNVAEEENGEIKKEIWLETKKLWRIVGPAIFTRVTTNLIFVITQAFAGHLGELELAAISIVNNVIIGFNYSLFIGMATALETLCGQAFGAKKYDMFGVYLQRSWIVLFLFSILLLPMYIFATPILKFMGQPDDIAELSGIISVWAIPTHFSFAFFFPINRFLQCQLKNSVIAISSGVSLVVHIFVCWLFVYVLELGVIGTIATANVSWWLNVFILFTYTTCGGCPLTWTGFSMESFTRLWEFTKLSASSGIMVCLENWYYRMLIVMTGNLEDARIDVDSMSICMSINGLEMMVPLAFFAGTSVRVANELGAGNGKRARFAMIISVTQSLIIGIIISVLIYFLLDQIGWMFSSSETVLKAVNNLSILLSFAILLNSVQPVLSGVAVGSGWQSLVAFINLGCYYFIGLPLGIVMGWMFKFGVKGIWAGMIFGGTMVQTLILIFITMRCDWEKEAQNAKVRVNKWSVSDARK</sequence>
<dbReference type="EMBL" id="AB006703">
    <property type="protein sequence ID" value="BAB09065.1"/>
    <property type="molecule type" value="Genomic_DNA"/>
</dbReference>
<dbReference type="EMBL" id="CP002688">
    <property type="protein sequence ID" value="AED95052.1"/>
    <property type="molecule type" value="Genomic_DNA"/>
</dbReference>
<dbReference type="RefSeq" id="NP_199218.1">
    <property type="nucleotide sequence ID" value="NM_123772.3"/>
</dbReference>
<dbReference type="SMR" id="Q9FNC1"/>
<dbReference type="FunCoup" id="Q9FNC1">
    <property type="interactions" value="6"/>
</dbReference>
<dbReference type="IntAct" id="Q9FNC1">
    <property type="interactions" value="2"/>
</dbReference>
<dbReference type="PaxDb" id="3702-AT5G44050.1"/>
<dbReference type="ProteomicsDB" id="222221"/>
<dbReference type="EnsemblPlants" id="AT5G44050.1">
    <property type="protein sequence ID" value="AT5G44050.1"/>
    <property type="gene ID" value="AT5G44050"/>
</dbReference>
<dbReference type="GeneID" id="834428"/>
<dbReference type="Gramene" id="AT5G44050.1">
    <property type="protein sequence ID" value="AT5G44050.1"/>
    <property type="gene ID" value="AT5G44050"/>
</dbReference>
<dbReference type="KEGG" id="ath:AT5G44050"/>
<dbReference type="Araport" id="AT5G44050"/>
<dbReference type="TAIR" id="AT5G44050">
    <property type="gene designation" value="ATDTX28"/>
</dbReference>
<dbReference type="eggNOG" id="KOG1347">
    <property type="taxonomic scope" value="Eukaryota"/>
</dbReference>
<dbReference type="HOGENOM" id="CLU_012893_1_4_1"/>
<dbReference type="InParanoid" id="Q9FNC1"/>
<dbReference type="OMA" id="MINGLEM"/>
<dbReference type="PhylomeDB" id="Q9FNC1"/>
<dbReference type="PRO" id="PR:Q9FNC1"/>
<dbReference type="Proteomes" id="UP000006548">
    <property type="component" value="Chromosome 5"/>
</dbReference>
<dbReference type="ExpressionAtlas" id="Q9FNC1">
    <property type="expression patterns" value="baseline and differential"/>
</dbReference>
<dbReference type="GO" id="GO:0016020">
    <property type="term" value="C:membrane"/>
    <property type="evidence" value="ECO:0007669"/>
    <property type="project" value="UniProtKB-SubCell"/>
</dbReference>
<dbReference type="GO" id="GO:0015297">
    <property type="term" value="F:antiporter activity"/>
    <property type="evidence" value="ECO:0007669"/>
    <property type="project" value="InterPro"/>
</dbReference>
<dbReference type="GO" id="GO:0042910">
    <property type="term" value="F:xenobiotic transmembrane transporter activity"/>
    <property type="evidence" value="ECO:0007669"/>
    <property type="project" value="InterPro"/>
</dbReference>
<dbReference type="GO" id="GO:1990961">
    <property type="term" value="P:xenobiotic detoxification by transmembrane export across the plasma membrane"/>
    <property type="evidence" value="ECO:0007669"/>
    <property type="project" value="InterPro"/>
</dbReference>
<dbReference type="CDD" id="cd13132">
    <property type="entry name" value="MATE_eukaryotic"/>
    <property type="match status" value="1"/>
</dbReference>
<dbReference type="InterPro" id="IPR045069">
    <property type="entry name" value="MATE_euk"/>
</dbReference>
<dbReference type="InterPro" id="IPR002528">
    <property type="entry name" value="MATE_fam"/>
</dbReference>
<dbReference type="NCBIfam" id="TIGR00797">
    <property type="entry name" value="matE"/>
    <property type="match status" value="1"/>
</dbReference>
<dbReference type="PANTHER" id="PTHR11206">
    <property type="entry name" value="MULTIDRUG RESISTANCE PROTEIN"/>
    <property type="match status" value="1"/>
</dbReference>
<dbReference type="Pfam" id="PF01554">
    <property type="entry name" value="MatE"/>
    <property type="match status" value="2"/>
</dbReference>
<comment type="subcellular location">
    <subcellularLocation>
        <location evidence="1">Membrane</location>
        <topology evidence="1">Multi-pass membrane protein</topology>
    </subcellularLocation>
</comment>
<comment type="similarity">
    <text evidence="3">Belongs to the multi antimicrobial extrusion (MATE) (TC 2.A.66.1) family.</text>
</comment>
<name>DTX28_ARATH</name>
<feature type="chain" id="PRO_0000434069" description="Protein DETOXIFICATION 28">
    <location>
        <begin position="1"/>
        <end position="491"/>
    </location>
</feature>
<feature type="transmembrane region" description="Helical" evidence="1">
    <location>
        <begin position="47"/>
        <end position="67"/>
    </location>
</feature>
<feature type="transmembrane region" description="Helical" evidence="1">
    <location>
        <begin position="77"/>
        <end position="97"/>
    </location>
</feature>
<feature type="transmembrane region" description="Helical" evidence="1">
    <location>
        <begin position="127"/>
        <end position="147"/>
    </location>
</feature>
<feature type="transmembrane region" description="Helical" evidence="1">
    <location>
        <begin position="160"/>
        <end position="180"/>
    </location>
</feature>
<feature type="transmembrane region" description="Helical" evidence="1">
    <location>
        <begin position="192"/>
        <end position="212"/>
    </location>
</feature>
<feature type="transmembrane region" description="Helical" evidence="1">
    <location>
        <begin position="228"/>
        <end position="248"/>
    </location>
</feature>
<feature type="transmembrane region" description="Helical" evidence="3">
    <location>
        <begin position="272"/>
        <end position="292"/>
    </location>
</feature>
<feature type="transmembrane region" description="Helical" evidence="1">
    <location>
        <begin position="302"/>
        <end position="322"/>
    </location>
</feature>
<feature type="transmembrane region" description="Helical" evidence="1">
    <location>
        <begin position="352"/>
        <end position="372"/>
    </location>
</feature>
<feature type="transmembrane region" description="Helical" evidence="1">
    <location>
        <begin position="387"/>
        <end position="407"/>
    </location>
</feature>
<feature type="transmembrane region" description="Helical" evidence="1">
    <location>
        <begin position="414"/>
        <end position="434"/>
    </location>
</feature>
<feature type="transmembrane region" description="Helical" evidence="1">
    <location>
        <begin position="444"/>
        <end position="464"/>
    </location>
</feature>
<gene>
    <name evidence="2" type="primary">DTX28</name>
    <name evidence="4" type="ordered locus">At5g44050</name>
    <name evidence="5" type="ORF">MRH10.16</name>
</gene>
<accession>Q9FNC1</accession>
<reference key="1">
    <citation type="journal article" date="1997" name="DNA Res.">
        <title>Structural analysis of Arabidopsis thaliana chromosome 5. II. Sequence features of the regions of 1,044,062 bp covered by thirteen physically assigned P1 clones.</title>
        <authorList>
            <person name="Kotani H."/>
            <person name="Nakamura Y."/>
            <person name="Sato S."/>
            <person name="Kaneko T."/>
            <person name="Asamizu E."/>
            <person name="Miyajima N."/>
            <person name="Tabata S."/>
        </authorList>
    </citation>
    <scope>NUCLEOTIDE SEQUENCE [LARGE SCALE GENOMIC DNA]</scope>
    <source>
        <strain>cv. Columbia</strain>
    </source>
</reference>
<reference key="2">
    <citation type="journal article" date="2017" name="Plant J.">
        <title>Araport11: a complete reannotation of the Arabidopsis thaliana reference genome.</title>
        <authorList>
            <person name="Cheng C.Y."/>
            <person name="Krishnakumar V."/>
            <person name="Chan A.P."/>
            <person name="Thibaud-Nissen F."/>
            <person name="Schobel S."/>
            <person name="Town C.D."/>
        </authorList>
    </citation>
    <scope>GENOME REANNOTATION</scope>
    <source>
        <strain>cv. Columbia</strain>
    </source>
</reference>
<reference key="3">
    <citation type="journal article" date="2002" name="J. Biol. Chem.">
        <title>Functional cloning and characterization of a plant efflux carrier for multidrug and heavy metal detoxification.</title>
        <authorList>
            <person name="Li L."/>
            <person name="He Z."/>
            <person name="Pandey G.K."/>
            <person name="Tsuchiya T."/>
            <person name="Luan S."/>
        </authorList>
    </citation>
    <scope>GENE FAMILY</scope>
    <scope>NOMENCLATURE</scope>
</reference>
<reference key="4">
    <citation type="journal article" date="2003" name="Eur. J. Biochem.">
        <title>The multidrug/oligosaccharidyl-lipid/polysaccharide (MOP) exporter superfamily.</title>
        <authorList>
            <person name="Hvorup R.N."/>
            <person name="Winnen B."/>
            <person name="Chang A.B."/>
            <person name="Jiang Y."/>
            <person name="Zhou X.F."/>
            <person name="Saier M.H. Jr."/>
        </authorList>
    </citation>
    <scope>GENE FAMILY</scope>
</reference>
<protein>
    <recommendedName>
        <fullName evidence="2">Protein DETOXIFICATION 28</fullName>
        <shortName evidence="2">AtDTX28</shortName>
    </recommendedName>
    <alternativeName>
        <fullName evidence="3">Multidrug and toxic compound extrusion protein 28</fullName>
        <shortName evidence="3">MATE protein 28</shortName>
    </alternativeName>
</protein>
<proteinExistence type="inferred from homology"/>
<keyword id="KW-0472">Membrane</keyword>
<keyword id="KW-1185">Reference proteome</keyword>
<keyword id="KW-0812">Transmembrane</keyword>
<keyword id="KW-1133">Transmembrane helix</keyword>
<keyword id="KW-0813">Transport</keyword>
<evidence type="ECO:0000255" key="1"/>
<evidence type="ECO:0000303" key="2">
    <source>
    </source>
</evidence>
<evidence type="ECO:0000305" key="3"/>
<evidence type="ECO:0000312" key="4">
    <source>
        <dbReference type="Araport" id="AT5G44050"/>
    </source>
</evidence>
<evidence type="ECO:0000312" key="5">
    <source>
        <dbReference type="EMBL" id="BAB09065.1"/>
    </source>
</evidence>